<keyword id="KW-0002">3D-structure</keyword>
<keyword id="KW-0106">Calcium</keyword>
<keyword id="KW-0479">Metal-binding</keyword>
<keyword id="KW-0514">Muscle protein</keyword>
<keyword id="KW-0677">Repeat</keyword>
<proteinExistence type="evidence at protein level"/>
<name>PRVA_TRISE</name>
<evidence type="ECO:0000255" key="1">
    <source>
        <dbReference type="PROSITE-ProRule" id="PRU00448"/>
    </source>
</evidence>
<evidence type="ECO:0000305" key="2"/>
<evidence type="ECO:0007829" key="3">
    <source>
        <dbReference type="PDB" id="5ZGM"/>
    </source>
</evidence>
<sequence length="109" mass="11931">PMTKVLKADDINKAISAFKDPGTFDYKRFFHLVGLKGKTDAQVKEVFEILDKDQSGFIEEEELKGVLKGFSAHGRDLNDTETKALLAAGDSDHDGKIGADEFAKMVAQA</sequence>
<protein>
    <recommendedName>
        <fullName>Parvalbumin alpha</fullName>
    </recommendedName>
</protein>
<accession>P30563</accession>
<organism>
    <name type="scientific">Triakis semifasciata</name>
    <name type="common">Leopard shark</name>
    <dbReference type="NCBI Taxonomy" id="30493"/>
    <lineage>
        <taxon>Eukaryota</taxon>
        <taxon>Metazoa</taxon>
        <taxon>Chordata</taxon>
        <taxon>Craniata</taxon>
        <taxon>Vertebrata</taxon>
        <taxon>Chondrichthyes</taxon>
        <taxon>Elasmobranchii</taxon>
        <taxon>Galeomorphii</taxon>
        <taxon>Galeoidea</taxon>
        <taxon>Carcharhiniformes</taxon>
        <taxon>Triakidae</taxon>
        <taxon>Triakis</taxon>
    </lineage>
</organism>
<dbReference type="PDB" id="5PAL">
    <property type="method" value="X-ray"/>
    <property type="resolution" value="1.54 A"/>
    <property type="chains" value="A=1-109"/>
</dbReference>
<dbReference type="PDB" id="5ZGM">
    <property type="method" value="X-ray"/>
    <property type="resolution" value="1.40 A"/>
    <property type="chains" value="A/B=1-109"/>
</dbReference>
<dbReference type="PDBsum" id="5PAL"/>
<dbReference type="PDBsum" id="5ZGM"/>
<dbReference type="SMR" id="P30563"/>
<dbReference type="EvolutionaryTrace" id="P30563"/>
<dbReference type="GO" id="GO:0005737">
    <property type="term" value="C:cytoplasm"/>
    <property type="evidence" value="ECO:0007669"/>
    <property type="project" value="TreeGrafter"/>
</dbReference>
<dbReference type="GO" id="GO:0005509">
    <property type="term" value="F:calcium ion binding"/>
    <property type="evidence" value="ECO:0007669"/>
    <property type="project" value="InterPro"/>
</dbReference>
<dbReference type="CDD" id="cd16251">
    <property type="entry name" value="EFh_parvalbumin_like"/>
    <property type="match status" value="1"/>
</dbReference>
<dbReference type="FunFam" id="1.10.238.10:FF:000060">
    <property type="entry name" value="Parvalbumin, thymic"/>
    <property type="match status" value="1"/>
</dbReference>
<dbReference type="Gene3D" id="1.10.238.10">
    <property type="entry name" value="EF-hand"/>
    <property type="match status" value="1"/>
</dbReference>
<dbReference type="InterPro" id="IPR011992">
    <property type="entry name" value="EF-hand-dom_pair"/>
</dbReference>
<dbReference type="InterPro" id="IPR018247">
    <property type="entry name" value="EF_Hand_1_Ca_BS"/>
</dbReference>
<dbReference type="InterPro" id="IPR002048">
    <property type="entry name" value="EF_hand_dom"/>
</dbReference>
<dbReference type="InterPro" id="IPR008080">
    <property type="entry name" value="Parvalbumin"/>
</dbReference>
<dbReference type="PANTHER" id="PTHR11653">
    <property type="entry name" value="PARVALBUMIN ALPHA"/>
    <property type="match status" value="1"/>
</dbReference>
<dbReference type="PANTHER" id="PTHR11653:SF2">
    <property type="entry name" value="PARVALBUMIN ALPHA"/>
    <property type="match status" value="1"/>
</dbReference>
<dbReference type="Pfam" id="PF13499">
    <property type="entry name" value="EF-hand_7"/>
    <property type="match status" value="1"/>
</dbReference>
<dbReference type="PRINTS" id="PR01697">
    <property type="entry name" value="PARVALBUMIN"/>
</dbReference>
<dbReference type="SMART" id="SM00054">
    <property type="entry name" value="EFh"/>
    <property type="match status" value="2"/>
</dbReference>
<dbReference type="SUPFAM" id="SSF47473">
    <property type="entry name" value="EF-hand"/>
    <property type="match status" value="1"/>
</dbReference>
<dbReference type="PROSITE" id="PS00018">
    <property type="entry name" value="EF_HAND_1"/>
    <property type="match status" value="2"/>
</dbReference>
<dbReference type="PROSITE" id="PS50222">
    <property type="entry name" value="EF_HAND_2"/>
    <property type="match status" value="2"/>
</dbReference>
<reference key="1">
    <citation type="journal article" date="1992" name="J. Mol. Biol.">
        <title>Crystal structure of the unique parvalbumin component from muscle of the leopard shark (Triakis semifasciata). The first X-ray study of an alpha-parvalbumin.</title>
        <authorList>
            <person name="Roquet F."/>
            <person name="Declercq J.-P."/>
            <person name="Tinant B."/>
            <person name="Rambaud J."/>
            <person name="Parello J."/>
        </authorList>
    </citation>
    <scope>X-RAY CRYSTALLOGRAPHY (1.54 ANGSTROMS)</scope>
    <source>
        <tissue>Muscle</tissue>
    </source>
</reference>
<comment type="function">
    <text>In muscle, parvalbumin is thought to be involved in relaxation after contraction. It binds two calcium ions.</text>
</comment>
<comment type="similarity">
    <text evidence="2">Belongs to the parvalbumin family.</text>
</comment>
<feature type="chain" id="PRO_0000073601" description="Parvalbumin alpha">
    <location>
        <begin position="1"/>
        <end position="109"/>
    </location>
</feature>
<feature type="domain" description="EF-hand 1" evidence="1">
    <location>
        <begin position="38"/>
        <end position="73"/>
    </location>
</feature>
<feature type="domain" description="EF-hand 2" evidence="1">
    <location>
        <begin position="77"/>
        <end position="109"/>
    </location>
</feature>
<feature type="binding site" evidence="1">
    <location>
        <position position="51"/>
    </location>
    <ligand>
        <name>Ca(2+)</name>
        <dbReference type="ChEBI" id="CHEBI:29108"/>
        <label>1</label>
    </ligand>
</feature>
<feature type="binding site" evidence="1">
    <location>
        <position position="53"/>
    </location>
    <ligand>
        <name>Ca(2+)</name>
        <dbReference type="ChEBI" id="CHEBI:29108"/>
        <label>1</label>
    </ligand>
</feature>
<feature type="binding site" evidence="1">
    <location>
        <position position="55"/>
    </location>
    <ligand>
        <name>Ca(2+)</name>
        <dbReference type="ChEBI" id="CHEBI:29108"/>
        <label>1</label>
    </ligand>
</feature>
<feature type="binding site" evidence="1">
    <location>
        <position position="62"/>
    </location>
    <ligand>
        <name>Ca(2+)</name>
        <dbReference type="ChEBI" id="CHEBI:29108"/>
        <label>1</label>
    </ligand>
</feature>
<feature type="binding site" evidence="1">
    <location>
        <position position="90"/>
    </location>
    <ligand>
        <name>Ca(2+)</name>
        <dbReference type="ChEBI" id="CHEBI:29108"/>
        <label>2</label>
    </ligand>
</feature>
<feature type="binding site" evidence="1">
    <location>
        <position position="92"/>
    </location>
    <ligand>
        <name>Ca(2+)</name>
        <dbReference type="ChEBI" id="CHEBI:29108"/>
        <label>2</label>
    </ligand>
</feature>
<feature type="binding site" evidence="1">
    <location>
        <position position="94"/>
    </location>
    <ligand>
        <name>Ca(2+)</name>
        <dbReference type="ChEBI" id="CHEBI:29108"/>
        <label>2</label>
    </ligand>
</feature>
<feature type="binding site" evidence="1">
    <location>
        <position position="96"/>
    </location>
    <ligand>
        <name>Ca(2+)</name>
        <dbReference type="ChEBI" id="CHEBI:29108"/>
        <label>2</label>
    </ligand>
</feature>
<feature type="binding site" evidence="1">
    <location>
        <position position="101"/>
    </location>
    <ligand>
        <name>Ca(2+)</name>
        <dbReference type="ChEBI" id="CHEBI:29108"/>
        <label>2</label>
    </ligand>
</feature>
<feature type="helix" evidence="3">
    <location>
        <begin position="2"/>
        <end position="4"/>
    </location>
</feature>
<feature type="helix" evidence="3">
    <location>
        <begin position="8"/>
        <end position="17"/>
    </location>
</feature>
<feature type="helix" evidence="3">
    <location>
        <begin position="26"/>
        <end position="32"/>
    </location>
</feature>
<feature type="helix" evidence="3">
    <location>
        <begin position="40"/>
        <end position="50"/>
    </location>
</feature>
<feature type="strand" evidence="3">
    <location>
        <begin position="55"/>
        <end position="58"/>
    </location>
</feature>
<feature type="helix" evidence="3">
    <location>
        <begin position="60"/>
        <end position="64"/>
    </location>
</feature>
<feature type="helix" evidence="3">
    <location>
        <begin position="66"/>
        <end position="70"/>
    </location>
</feature>
<feature type="helix" evidence="3">
    <location>
        <begin position="79"/>
        <end position="89"/>
    </location>
</feature>
<feature type="strand" evidence="3">
    <location>
        <begin position="94"/>
        <end position="97"/>
    </location>
</feature>
<feature type="helix" evidence="3">
    <location>
        <begin position="99"/>
        <end position="108"/>
    </location>
</feature>